<evidence type="ECO:0000255" key="1"/>
<evidence type="ECO:0000255" key="2">
    <source>
        <dbReference type="PROSITE-ProRule" id="PRU00362"/>
    </source>
</evidence>
<evidence type="ECO:0000305" key="3"/>
<feature type="chain" id="PRO_0000093247" description="Putative ABC transporter ATP-binding MG390">
    <location>
        <begin position="1"/>
        <end position="660"/>
    </location>
</feature>
<feature type="transmembrane region" description="Helical" evidence="1">
    <location>
        <begin position="150"/>
        <end position="170"/>
    </location>
</feature>
<feature type="transmembrane region" description="Helical" evidence="1">
    <location>
        <begin position="188"/>
        <end position="208"/>
    </location>
</feature>
<feature type="transmembrane region" description="Helical" evidence="1">
    <location>
        <begin position="265"/>
        <end position="285"/>
    </location>
</feature>
<feature type="transmembrane region" description="Helical" evidence="1">
    <location>
        <begin position="290"/>
        <end position="310"/>
    </location>
</feature>
<feature type="transmembrane region" description="Helical" evidence="1">
    <location>
        <begin position="379"/>
        <end position="399"/>
    </location>
</feature>
<feature type="transmembrane region" description="Helical" evidence="1">
    <location>
        <begin position="402"/>
        <end position="422"/>
    </location>
</feature>
<feature type="domain" description="Peptidase C39" evidence="2">
    <location>
        <begin position="6"/>
        <end position="126"/>
    </location>
</feature>
<feature type="domain" description="ABC transporter" evidence="2">
    <location>
        <begin position="464"/>
        <end position="657"/>
    </location>
</feature>
<feature type="active site" evidence="2">
    <location>
        <position position="12"/>
    </location>
</feature>
<feature type="binding site" evidence="2">
    <location>
        <begin position="494"/>
        <end position="501"/>
    </location>
    <ligand>
        <name>ATP</name>
        <dbReference type="ChEBI" id="CHEBI:30616"/>
    </ligand>
</feature>
<feature type="sequence conflict" description="In Ref. 2; AAA03404." evidence="3" ref="2">
    <original>L</original>
    <variation>F</variation>
    <location>
        <position position="392"/>
    </location>
</feature>
<gene>
    <name type="ordered locus">MG390</name>
</gene>
<dbReference type="EMBL" id="L43967">
    <property type="protein sequence ID" value="AAC71618.1"/>
    <property type="molecule type" value="Genomic_DNA"/>
</dbReference>
<dbReference type="EMBL" id="U02248">
    <property type="protein sequence ID" value="AAA03404.1"/>
    <property type="molecule type" value="Genomic_DNA"/>
</dbReference>
<dbReference type="EMBL" id="U02218">
    <property type="protein sequence ID" value="AAA03372.1"/>
    <property type="molecule type" value="Genomic_DNA"/>
</dbReference>
<dbReference type="PIR" id="B64243">
    <property type="entry name" value="B64243"/>
</dbReference>
<dbReference type="RefSeq" id="WP_010869463.1">
    <property type="nucleotide sequence ID" value="NC_000908.2"/>
</dbReference>
<dbReference type="SMR" id="Q49430"/>
<dbReference type="STRING" id="243273.MG_390"/>
<dbReference type="GeneID" id="88282575"/>
<dbReference type="KEGG" id="mge:MG_390"/>
<dbReference type="eggNOG" id="COG2274">
    <property type="taxonomic scope" value="Bacteria"/>
</dbReference>
<dbReference type="HOGENOM" id="CLU_488191_0_0_14"/>
<dbReference type="InParanoid" id="Q49430"/>
<dbReference type="OrthoDB" id="403954at2"/>
<dbReference type="BioCyc" id="MGEN243273:G1GJ2-486-MONOMER"/>
<dbReference type="Proteomes" id="UP000000807">
    <property type="component" value="Chromosome"/>
</dbReference>
<dbReference type="GO" id="GO:0005886">
    <property type="term" value="C:plasma membrane"/>
    <property type="evidence" value="ECO:0007669"/>
    <property type="project" value="UniProtKB-SubCell"/>
</dbReference>
<dbReference type="GO" id="GO:0005524">
    <property type="term" value="F:ATP binding"/>
    <property type="evidence" value="ECO:0007669"/>
    <property type="project" value="UniProtKB-KW"/>
</dbReference>
<dbReference type="GO" id="GO:0016887">
    <property type="term" value="F:ATP hydrolysis activity"/>
    <property type="evidence" value="ECO:0007669"/>
    <property type="project" value="InterPro"/>
</dbReference>
<dbReference type="GO" id="GO:0008234">
    <property type="term" value="F:cysteine-type peptidase activity"/>
    <property type="evidence" value="ECO:0007669"/>
    <property type="project" value="UniProtKB-KW"/>
</dbReference>
<dbReference type="GO" id="GO:0006508">
    <property type="term" value="P:proteolysis"/>
    <property type="evidence" value="ECO:0007669"/>
    <property type="project" value="UniProtKB-KW"/>
</dbReference>
<dbReference type="CDD" id="cd00267">
    <property type="entry name" value="ABC_ATPase"/>
    <property type="match status" value="1"/>
</dbReference>
<dbReference type="CDD" id="cd02424">
    <property type="entry name" value="Peptidase_C39E"/>
    <property type="match status" value="1"/>
</dbReference>
<dbReference type="Gene3D" id="3.90.70.10">
    <property type="entry name" value="Cysteine proteinases"/>
    <property type="match status" value="1"/>
</dbReference>
<dbReference type="Gene3D" id="3.40.50.300">
    <property type="entry name" value="P-loop containing nucleotide triphosphate hydrolases"/>
    <property type="match status" value="1"/>
</dbReference>
<dbReference type="InterPro" id="IPR036640">
    <property type="entry name" value="ABC1_TM_sf"/>
</dbReference>
<dbReference type="InterPro" id="IPR003439">
    <property type="entry name" value="ABC_transporter-like_ATP-bd"/>
</dbReference>
<dbReference type="InterPro" id="IPR027417">
    <property type="entry name" value="P-loop_NTPase"/>
</dbReference>
<dbReference type="InterPro" id="IPR005074">
    <property type="entry name" value="Peptidase_C39"/>
</dbReference>
<dbReference type="PANTHER" id="PTHR43158">
    <property type="entry name" value="SKFA PEPTIDE EXPORT ATP-BINDING PROTEIN SKFE"/>
    <property type="match status" value="1"/>
</dbReference>
<dbReference type="PANTHER" id="PTHR43158:SF2">
    <property type="entry name" value="SKFA PEPTIDE EXPORT ATP-BINDING PROTEIN SKFE"/>
    <property type="match status" value="1"/>
</dbReference>
<dbReference type="Pfam" id="PF00005">
    <property type="entry name" value="ABC_tran"/>
    <property type="match status" value="1"/>
</dbReference>
<dbReference type="Pfam" id="PF03412">
    <property type="entry name" value="Peptidase_C39"/>
    <property type="match status" value="1"/>
</dbReference>
<dbReference type="SUPFAM" id="SSF90123">
    <property type="entry name" value="ABC transporter transmembrane region"/>
    <property type="match status" value="1"/>
</dbReference>
<dbReference type="SUPFAM" id="SSF52540">
    <property type="entry name" value="P-loop containing nucleoside triphosphate hydrolases"/>
    <property type="match status" value="1"/>
</dbReference>
<dbReference type="PROSITE" id="PS50990">
    <property type="entry name" value="PEPTIDASE_C39"/>
    <property type="match status" value="1"/>
</dbReference>
<protein>
    <recommendedName>
        <fullName>Putative ABC transporter ATP-binding MG390</fullName>
    </recommendedName>
</protein>
<keyword id="KW-0067">ATP-binding</keyword>
<keyword id="KW-1003">Cell membrane</keyword>
<keyword id="KW-0378">Hydrolase</keyword>
<keyword id="KW-0472">Membrane</keyword>
<keyword id="KW-0547">Nucleotide-binding</keyword>
<keyword id="KW-0645">Protease</keyword>
<keyword id="KW-1185">Reference proteome</keyword>
<keyword id="KW-0788">Thiol protease</keyword>
<keyword id="KW-0812">Transmembrane</keyword>
<keyword id="KW-1133">Transmembrane helix</keyword>
<keyword id="KW-0813">Transport</keyword>
<reference key="1">
    <citation type="journal article" date="1995" name="Science">
        <title>The minimal gene complement of Mycoplasma genitalium.</title>
        <authorList>
            <person name="Fraser C.M."/>
            <person name="Gocayne J.D."/>
            <person name="White O."/>
            <person name="Adams M.D."/>
            <person name="Clayton R.A."/>
            <person name="Fleischmann R.D."/>
            <person name="Bult C.J."/>
            <person name="Kerlavage A.R."/>
            <person name="Sutton G.G."/>
            <person name="Kelley J.M."/>
            <person name="Fritchman J.L."/>
            <person name="Weidman J.F."/>
            <person name="Small K.V."/>
            <person name="Sandusky M."/>
            <person name="Fuhrmann J.L."/>
            <person name="Nguyen D.T."/>
            <person name="Utterback T.R."/>
            <person name="Saudek D.M."/>
            <person name="Phillips C.A."/>
            <person name="Merrick J.M."/>
            <person name="Tomb J.-F."/>
            <person name="Dougherty B.A."/>
            <person name="Bott K.F."/>
            <person name="Hu P.-C."/>
            <person name="Lucier T.S."/>
            <person name="Peterson S.N."/>
            <person name="Smith H.O."/>
            <person name="Hutchison C.A. III"/>
            <person name="Venter J.C."/>
        </authorList>
    </citation>
    <scope>NUCLEOTIDE SEQUENCE [LARGE SCALE GENOMIC DNA]</scope>
    <source>
        <strain>ATCC 33530 / DSM 19775 / NCTC 10195 / G37</strain>
    </source>
</reference>
<reference key="2">
    <citation type="journal article" date="1993" name="J. Bacteriol.">
        <title>A survey of the Mycoplasma genitalium genome by using random sequencing.</title>
        <authorList>
            <person name="Peterson S.N."/>
            <person name="Hu P.-C."/>
            <person name="Bott K.F."/>
            <person name="Hutchison C.A. III"/>
        </authorList>
    </citation>
    <scope>NUCLEOTIDE SEQUENCE [GENOMIC DNA] OF 392-581</scope>
    <source>
        <strain>ATCC 33530 / DSM 19775 / NCTC 10195 / G37</strain>
    </source>
</reference>
<sequence>MKIIYQEQQNECGICVIGMLANAIHDEKYVHDELLEQINLPPNGLSLFEMESYGKKFGLEINSYQLTFQELKELDSKFIIVHFKDHFVIVKNKHENSWEVYDPAKGKYLLTDEKLEKLWTGYAATVAKAFKEIPPVNKSNFFSNFFDFNLVTFYVFIELIIIGISTLLATASRTIITNTVDFGTAVNLVVLVVYFSCLKGLNLLLQVILQLIRNFLFWKQYRGYLGWIIQSLQQKSFVYFSNKSPNQLIERQFYLKEVLSFFNFYIPNLIISCVVALIIGVLIGINQLEFLLIAIAQIVVNAGLFCYDFFFTKKITKKEIPYVELQNKISLQLDENLREEQNKKRFNFLMLNFRKALLQNQNINNQKEINRLTIENIKSFFQQGFDFAILGLGVIGIIEQRYQLSFLFYVFGIQSLFSTYATRIVQFGAAINIYHYCREKLVNLFIETKKDEGIKVNWQCPDEISLENLSVTLNQHVDLANLSLKIKNETVIFGQNGSGKSTFLKILTGRGFEYTGNIKFNNVDLKRCSKEQLFENVYYLKGQNLMQTEANDFGFSEALFNNQNPHIYQLLFDAGVQNQTKLSSGQKQILQLFLLSNIKNKVILLDECMNAIAPEIKNRVYQLLVKPLTLNNFVVLVEHDLSFASEAQNKINLTNYLRNS</sequence>
<comment type="subcellular location">
    <subcellularLocation>
        <location evidence="3">Cell membrane</location>
        <topology evidence="3">Multi-pass membrane protein</topology>
    </subcellularLocation>
</comment>
<comment type="similarity">
    <text evidence="3">Belongs to the ABC transporter superfamily.</text>
</comment>
<proteinExistence type="inferred from homology"/>
<accession>Q49430</accession>
<accession>Q49332</accession>
<accession>Q49356</accession>
<name>Y390_MYCGE</name>
<organism>
    <name type="scientific">Mycoplasma genitalium (strain ATCC 33530 / DSM 19775 / NCTC 10195 / G37)</name>
    <name type="common">Mycoplasmoides genitalium</name>
    <dbReference type="NCBI Taxonomy" id="243273"/>
    <lineage>
        <taxon>Bacteria</taxon>
        <taxon>Bacillati</taxon>
        <taxon>Mycoplasmatota</taxon>
        <taxon>Mycoplasmoidales</taxon>
        <taxon>Mycoplasmoidaceae</taxon>
        <taxon>Mycoplasmoides</taxon>
    </lineage>
</organism>